<name>HSOP_WHEAT</name>
<reference key="1">
    <citation type="journal article" date="2011" name="Mol. Plant">
        <title>Cytosolic HSP90 cochaperones HOP and FKBP interact with freshly synthesized chloroplast preproteins of Arabidopsis.</title>
        <authorList>
            <person name="Fellerer C."/>
            <person name="Schweiger R."/>
            <person name="Schoengruber K."/>
            <person name="Soll J."/>
            <person name="Schwenkert S."/>
        </authorList>
    </citation>
    <scope>NUCLEOTIDE SEQUENCE [MRNA]</scope>
    <scope>FUNCTION</scope>
    <scope>SUBUNIT</scope>
    <scope>IDENTIFICATION BY MASS SPECTROMETRY</scope>
</reference>
<comment type="function">
    <text evidence="1 4">Mediates the association of the molecular chaperones HSP70 and HSP90 (By similarity). Mediates nuclear encoded chloroplast preproteins binding to HSP90 prior to chloroplastic sorting.</text>
</comment>
<comment type="subunit">
    <text evidence="4">Co-chaperone that forms a complex with HSP70 and HSP90 and preproteins (e.g. chloroplast preproteins).</text>
</comment>
<comment type="subcellular location">
    <subcellularLocation>
        <location evidence="1">Cytoplasm</location>
    </subcellularLocation>
    <subcellularLocation>
        <location evidence="1">Nucleus</location>
    </subcellularLocation>
</comment>
<comment type="domain">
    <text evidence="1">The tetratricopeptide repeat (TPR) domain, forming a carboxylate clamp (CC), mediates interaction with the highly conserved 'EEVD' motif at the C-terminal ends of HSP90 and HSP70.</text>
</comment>
<comment type="PTM">
    <text evidence="1">Phosphorylated.</text>
</comment>
<comment type="PTM">
    <text evidence="1">Acetylated.</text>
</comment>
<organism>
    <name type="scientific">Triticum aestivum</name>
    <name type="common">Wheat</name>
    <dbReference type="NCBI Taxonomy" id="4565"/>
    <lineage>
        <taxon>Eukaryota</taxon>
        <taxon>Viridiplantae</taxon>
        <taxon>Streptophyta</taxon>
        <taxon>Embryophyta</taxon>
        <taxon>Tracheophyta</taxon>
        <taxon>Spermatophyta</taxon>
        <taxon>Magnoliopsida</taxon>
        <taxon>Liliopsida</taxon>
        <taxon>Poales</taxon>
        <taxon>Poaceae</taxon>
        <taxon>BOP clade</taxon>
        <taxon>Pooideae</taxon>
        <taxon>Triticodae</taxon>
        <taxon>Triticeae</taxon>
        <taxon>Triticinae</taxon>
        <taxon>Triticum</taxon>
    </lineage>
</organism>
<sequence>MADEAKAKGNAAFSAGRFEEAAGHFSDAIALAPANHVLYSNRSAALASIHRYSDALADAEKTVELKPDWAKGYSRLGAAHLGLGDAASAAAAYEKGLALDPSNEGLKAGLADAKKAAAAPPRRAPSGGADAIGQMFQGPELWTKIASDPATRAYLDQPDFMQMLREVQRNPSSLNTYLSDPRMMQVLSLMLNIKIQTPQDSDFSQSSSPSQPPPQQQKQQPETKAREMEPEPQPEPMEVSDEEKERKERKAAALKEKEAGNASYKKKDFETAIQHYTKALELDDEDISYLTNRAAVYIEMGKYDECIEDCDKAVERGRELRADFKMVARALTRKGTALAKLAKNSKDYDIAIETFQKALTEHRNPDTLKRLNEAEKAKKDLEQQEYYDPKLADEEREKGNEMFKQQKYPEAIKHYNEAIRRNPKDARVYSNRAACYTKLGAMPEGLKDAEKCIELDPTFTKGYTRKGAVQFFMKEYEKAMETYQAGLKYDPNNQELLDGIRRCVEQINKANRGDISQEDLQEKQSKAMQDPEIQNILTDPIMRQVLMDFQENPRAAQDHLKDPGVAQKIQKLINAGIVQTR</sequence>
<gene>
    <name type="primary">HOP</name>
</gene>
<accession>F8RP11</accession>
<proteinExistence type="evidence at protein level"/>
<evidence type="ECO:0000250" key="1"/>
<evidence type="ECO:0000255" key="2"/>
<evidence type="ECO:0000256" key="3">
    <source>
        <dbReference type="SAM" id="MobiDB-lite"/>
    </source>
</evidence>
<evidence type="ECO:0000269" key="4">
    <source>
    </source>
</evidence>
<dbReference type="EMBL" id="HM998695">
    <property type="protein sequence ID" value="ADN05856.1"/>
    <property type="molecule type" value="mRNA"/>
</dbReference>
<dbReference type="SMR" id="F8RP11"/>
<dbReference type="STRING" id="4565.F8RP11"/>
<dbReference type="PaxDb" id="4565-Traes_6DL_3E8CC7CF1.2"/>
<dbReference type="eggNOG" id="KOG0548">
    <property type="taxonomic scope" value="Eukaryota"/>
</dbReference>
<dbReference type="Proteomes" id="UP000019116">
    <property type="component" value="Unplaced"/>
</dbReference>
<dbReference type="ExpressionAtlas" id="F8RP11">
    <property type="expression patterns" value="baseline and differential"/>
</dbReference>
<dbReference type="GO" id="GO:0005737">
    <property type="term" value="C:cytoplasm"/>
    <property type="evidence" value="ECO:0007669"/>
    <property type="project" value="UniProtKB-SubCell"/>
</dbReference>
<dbReference type="GO" id="GO:0005634">
    <property type="term" value="C:nucleus"/>
    <property type="evidence" value="ECO:0007669"/>
    <property type="project" value="UniProtKB-SubCell"/>
</dbReference>
<dbReference type="GO" id="GO:0051879">
    <property type="term" value="F:Hsp90 protein binding"/>
    <property type="evidence" value="ECO:0000314"/>
    <property type="project" value="UniProtKB"/>
</dbReference>
<dbReference type="GO" id="GO:0070678">
    <property type="term" value="F:preprotein binding"/>
    <property type="evidence" value="ECO:0000314"/>
    <property type="project" value="UniProtKB"/>
</dbReference>
<dbReference type="GO" id="GO:0051131">
    <property type="term" value="P:chaperone-mediated protein complex assembly"/>
    <property type="evidence" value="ECO:0000314"/>
    <property type="project" value="UniProtKB"/>
</dbReference>
<dbReference type="FunFam" id="1.25.40.10:FF:000102">
    <property type="entry name" value="hsp70-Hsp90 organizing protein 3-like"/>
    <property type="match status" value="1"/>
</dbReference>
<dbReference type="FunFam" id="1.10.260.100:FF:000004">
    <property type="entry name" value="Putative stress-induced-phosphoprotein 1"/>
    <property type="match status" value="1"/>
</dbReference>
<dbReference type="FunFam" id="1.25.40.10:FF:000010">
    <property type="entry name" value="Stress-induced phosphoprotein 1"/>
    <property type="match status" value="1"/>
</dbReference>
<dbReference type="FunFam" id="1.25.40.10:FF:000020">
    <property type="entry name" value="Stress-induced phosphoprotein 1"/>
    <property type="match status" value="1"/>
</dbReference>
<dbReference type="FunFam" id="1.10.260.100:FF:000002">
    <property type="entry name" value="Stress-induced-phosphoprotein 1 (Hsp70/Hsp90-organizing)"/>
    <property type="match status" value="1"/>
</dbReference>
<dbReference type="Gene3D" id="1.10.260.100">
    <property type="match status" value="2"/>
</dbReference>
<dbReference type="Gene3D" id="1.25.40.10">
    <property type="entry name" value="Tetratricopeptide repeat domain"/>
    <property type="match status" value="3"/>
</dbReference>
<dbReference type="InterPro" id="IPR041243">
    <property type="entry name" value="STI1/HOP_DP"/>
</dbReference>
<dbReference type="InterPro" id="IPR006636">
    <property type="entry name" value="STI1_HS-bd"/>
</dbReference>
<dbReference type="InterPro" id="IPR011990">
    <property type="entry name" value="TPR-like_helical_dom_sf"/>
</dbReference>
<dbReference type="InterPro" id="IPR013105">
    <property type="entry name" value="TPR_2"/>
</dbReference>
<dbReference type="InterPro" id="IPR019734">
    <property type="entry name" value="TPR_rpt"/>
</dbReference>
<dbReference type="PANTHER" id="PTHR22904:SF533">
    <property type="entry name" value="HSP70-HSP90 ORGANIZING PROTEIN 3"/>
    <property type="match status" value="1"/>
</dbReference>
<dbReference type="PANTHER" id="PTHR22904">
    <property type="entry name" value="TPR REPEAT CONTAINING PROTEIN"/>
    <property type="match status" value="1"/>
</dbReference>
<dbReference type="Pfam" id="PF17830">
    <property type="entry name" value="STI1-HOP_DP"/>
    <property type="match status" value="2"/>
</dbReference>
<dbReference type="Pfam" id="PF13414">
    <property type="entry name" value="TPR_11"/>
    <property type="match status" value="2"/>
</dbReference>
<dbReference type="Pfam" id="PF13432">
    <property type="entry name" value="TPR_16"/>
    <property type="match status" value="1"/>
</dbReference>
<dbReference type="Pfam" id="PF07719">
    <property type="entry name" value="TPR_2"/>
    <property type="match status" value="1"/>
</dbReference>
<dbReference type="Pfam" id="PF13181">
    <property type="entry name" value="TPR_8"/>
    <property type="match status" value="2"/>
</dbReference>
<dbReference type="SMART" id="SM00727">
    <property type="entry name" value="STI1"/>
    <property type="match status" value="2"/>
</dbReference>
<dbReference type="SMART" id="SM00028">
    <property type="entry name" value="TPR"/>
    <property type="match status" value="9"/>
</dbReference>
<dbReference type="SUPFAM" id="SSF48452">
    <property type="entry name" value="TPR-like"/>
    <property type="match status" value="3"/>
</dbReference>
<dbReference type="PROSITE" id="PS50005">
    <property type="entry name" value="TPR"/>
    <property type="match status" value="9"/>
</dbReference>
<dbReference type="PROSITE" id="PS50293">
    <property type="entry name" value="TPR_REGION"/>
    <property type="match status" value="2"/>
</dbReference>
<protein>
    <recommendedName>
        <fullName>Hsp70-Hsp90 organizing protein</fullName>
        <shortName>TaHop</shortName>
    </recommendedName>
</protein>
<feature type="chain" id="PRO_0000426704" description="Hsp70-Hsp90 organizing protein">
    <location>
        <begin position="1"/>
        <end position="581"/>
    </location>
</feature>
<feature type="repeat" description="TPR 1">
    <location>
        <begin position="2"/>
        <end position="35"/>
    </location>
</feature>
<feature type="repeat" description="TPR 2">
    <location>
        <begin position="37"/>
        <end position="69"/>
    </location>
</feature>
<feature type="repeat" description="TPR 3">
    <location>
        <begin position="70"/>
        <end position="103"/>
    </location>
</feature>
<feature type="domain" description="STI1 1">
    <location>
        <begin position="148"/>
        <end position="187"/>
    </location>
</feature>
<feature type="repeat" description="TPR 4">
    <location>
        <begin position="253"/>
        <end position="286"/>
    </location>
</feature>
<feature type="repeat" description="TPR 5">
    <location>
        <begin position="288"/>
        <end position="320"/>
    </location>
</feature>
<feature type="repeat" description="TPR 6">
    <location>
        <begin position="332"/>
        <end position="365"/>
    </location>
</feature>
<feature type="repeat" description="TPR 7">
    <location>
        <begin position="392"/>
        <end position="425"/>
    </location>
</feature>
<feature type="repeat" description="TPR 8">
    <location>
        <begin position="427"/>
        <end position="459"/>
    </location>
</feature>
<feature type="repeat" description="TPR 9">
    <location>
        <begin position="460"/>
        <end position="493"/>
    </location>
</feature>
<feature type="domain" description="STI1 2">
    <location>
        <begin position="530"/>
        <end position="569"/>
    </location>
</feature>
<feature type="region of interest" description="Disordered" evidence="3">
    <location>
        <begin position="199"/>
        <end position="261"/>
    </location>
</feature>
<feature type="short sequence motif" description="Bipartite nuclear localization signal" evidence="2">
    <location>
        <begin position="250"/>
        <end position="267"/>
    </location>
</feature>
<feature type="compositionally biased region" description="Low complexity" evidence="3">
    <location>
        <begin position="199"/>
        <end position="209"/>
    </location>
</feature>
<feature type="compositionally biased region" description="Basic and acidic residues" evidence="3">
    <location>
        <begin position="243"/>
        <end position="261"/>
    </location>
</feature>
<keyword id="KW-0007">Acetylation</keyword>
<keyword id="KW-0143">Chaperone</keyword>
<keyword id="KW-0963">Cytoplasm</keyword>
<keyword id="KW-0539">Nucleus</keyword>
<keyword id="KW-0597">Phosphoprotein</keyword>
<keyword id="KW-1185">Reference proteome</keyword>
<keyword id="KW-0677">Repeat</keyword>
<keyword id="KW-0346">Stress response</keyword>
<keyword id="KW-0802">TPR repeat</keyword>